<feature type="transit peptide" description="Chloroplast" evidence="3">
    <location>
        <begin position="1"/>
        <end position="55"/>
    </location>
</feature>
<feature type="chain" id="PRO_0000409867" description="Probable tocopherol O-methyltransferase, chloroplastic">
    <location>
        <begin position="56"/>
        <end position="362"/>
    </location>
</feature>
<feature type="region of interest" description="SAM motif I" evidence="4">
    <location>
        <begin position="141"/>
        <end position="150"/>
    </location>
</feature>
<feature type="region of interest" description="SAM motif II" evidence="4">
    <location>
        <begin position="204"/>
        <end position="212"/>
    </location>
</feature>
<feature type="region of interest" description="SAM motif III" evidence="4">
    <location>
        <begin position="231"/>
        <end position="240"/>
    </location>
</feature>
<comment type="function">
    <text evidence="2">Involved in the synthesis of tocopherol (vitamin E). Methylates gamma- and delta-tocopherol to form beta- and alpha-tocopherol, respectively.</text>
</comment>
<comment type="catalytic activity">
    <reaction evidence="2">
        <text>gamma-tocopherol + S-adenosyl-L-methionine = (+)-alpha-tocopherol + S-adenosyl-L-homocysteine + H(+)</text>
        <dbReference type="Rhea" id="RHEA:24012"/>
        <dbReference type="ChEBI" id="CHEBI:15378"/>
        <dbReference type="ChEBI" id="CHEBI:18145"/>
        <dbReference type="ChEBI" id="CHEBI:18185"/>
        <dbReference type="ChEBI" id="CHEBI:57856"/>
        <dbReference type="ChEBI" id="CHEBI:59789"/>
        <dbReference type="EC" id="2.1.1.95"/>
    </reaction>
</comment>
<comment type="catalytic activity">
    <reaction evidence="2">
        <text>delta-tocotrienol + S-adenosyl-L-methionine = beta-tocotrienol + S-adenosyl-L-homocysteine + H(+)</text>
        <dbReference type="Rhea" id="RHEA:38091"/>
        <dbReference type="ChEBI" id="CHEBI:15378"/>
        <dbReference type="ChEBI" id="CHEBI:33275"/>
        <dbReference type="ChEBI" id="CHEBI:33276"/>
        <dbReference type="ChEBI" id="CHEBI:57856"/>
        <dbReference type="ChEBI" id="CHEBI:59789"/>
        <dbReference type="EC" id="2.1.1.95"/>
    </reaction>
</comment>
<comment type="catalytic activity">
    <reaction evidence="2">
        <text>gamma-tocotrienol + S-adenosyl-L-methionine = alpha-tocotrienol + S-adenosyl-L-homocysteine + H(+)</text>
        <dbReference type="Rhea" id="RHEA:38095"/>
        <dbReference type="ChEBI" id="CHEBI:15378"/>
        <dbReference type="ChEBI" id="CHEBI:33270"/>
        <dbReference type="ChEBI" id="CHEBI:33277"/>
        <dbReference type="ChEBI" id="CHEBI:57856"/>
        <dbReference type="ChEBI" id="CHEBI:59789"/>
        <dbReference type="EC" id="2.1.1.95"/>
    </reaction>
</comment>
<comment type="catalytic activity">
    <reaction evidence="2">
        <text>delta-tocopherol + S-adenosyl-L-methionine = beta-tocopherol + S-adenosyl-L-homocysteine + H(+)</text>
        <dbReference type="Rhea" id="RHEA:37991"/>
        <dbReference type="ChEBI" id="CHEBI:15378"/>
        <dbReference type="ChEBI" id="CHEBI:47771"/>
        <dbReference type="ChEBI" id="CHEBI:47772"/>
        <dbReference type="ChEBI" id="CHEBI:57856"/>
        <dbReference type="ChEBI" id="CHEBI:59789"/>
        <dbReference type="EC" id="2.1.1.95"/>
    </reaction>
</comment>
<comment type="pathway">
    <text>Cofactor biosynthesis; tocopherol biosynthesis.</text>
</comment>
<comment type="subcellular location">
    <subcellularLocation>
        <location evidence="1">Plastid</location>
        <location evidence="1">Chloroplast</location>
    </subcellularLocation>
</comment>
<comment type="similarity">
    <text evidence="4">Belongs to the class I-like SAM-binding methyltransferase superfamily. gTMT family.</text>
</comment>
<proteinExistence type="evidence at transcript level"/>
<sequence length="362" mass="39671">MAHAAAATGALAPLHPLLRCTSRHLCASASPRAGLCLHHHRRRRRSSRRTKLAVRAMAPTLSSSSTAAAAPPGLKEGIAGLYDESSGVWESIWGEHMHHGFYDAGEAASMSDHRRAQIRMIEESLAFAAVPDDAEKKPKSVVDVGCGIGGSSRYLANKYGAQCYGITLSPVQAERGNALAAEQGLSDKVSFQVGDALEQPFPDGQFDLVWSMESGEHMPDKRQFVSELARVAAPGARIIIVTWCHRNLEPSEESLKPDELNLLKRICDAYYLPDWCSPSDYVKIAESLSLEDIRTADWSENVAPFWPAVIKSALTWKGLTSLLRSGWKTIRGAMVMPLMIEGYKKGLIKFTIITCRKPETTQ</sequence>
<gene>
    <name type="primary">VTE4</name>
    <name type="synonym">G-TMT</name>
    <name type="synonym">TMT</name>
    <name type="ordered locus">Os02g0701600</name>
    <name type="ordered locus">LOC_Os02g47310</name>
    <name type="ORF">OJ1111_E07.25</name>
</gene>
<protein>
    <recommendedName>
        <fullName>Probable tocopherol O-methyltransferase, chloroplastic</fullName>
        <ecNumber evidence="2">2.1.1.95</ecNumber>
    </recommendedName>
    <alternativeName>
        <fullName>Gamma-tocopherol methyltransferase</fullName>
    </alternativeName>
    <alternativeName>
        <fullName>Vitamin E pathway gene 4 protein</fullName>
    </alternativeName>
</protein>
<accession>Q6ZIK0</accession>
<accession>A0A0P0VNA3</accession>
<accession>Q1PBH7</accession>
<name>GTOMC_ORYSJ</name>
<evidence type="ECO:0000250" key="1"/>
<evidence type="ECO:0000250" key="2">
    <source>
        <dbReference type="UniProtKB" id="Q9ZSK1"/>
    </source>
</evidence>
<evidence type="ECO:0000255" key="3"/>
<evidence type="ECO:0000255" key="4">
    <source>
        <dbReference type="PROSITE-ProRule" id="PRU00914"/>
    </source>
</evidence>
<keyword id="KW-0150">Chloroplast</keyword>
<keyword id="KW-0489">Methyltransferase</keyword>
<keyword id="KW-0934">Plastid</keyword>
<keyword id="KW-1185">Reference proteome</keyword>
<keyword id="KW-0949">S-adenosyl-L-methionine</keyword>
<keyword id="KW-0808">Transferase</keyword>
<keyword id="KW-0809">Transit peptide</keyword>
<reference key="1">
    <citation type="submission" date="2006-03" db="EMBL/GenBank/DDBJ databases">
        <title>Molecular cloning of rice gamma-TMT.</title>
        <authorList>
            <person name="Zou L."/>
            <person name="Gao H."/>
        </authorList>
    </citation>
    <scope>NUCLEOTIDE SEQUENCE [MRNA]</scope>
</reference>
<reference key="2">
    <citation type="journal article" date="2005" name="Nature">
        <title>The map-based sequence of the rice genome.</title>
        <authorList>
            <consortium name="International rice genome sequencing project (IRGSP)"/>
        </authorList>
    </citation>
    <scope>NUCLEOTIDE SEQUENCE [LARGE SCALE GENOMIC DNA]</scope>
    <source>
        <strain>cv. Nipponbare</strain>
    </source>
</reference>
<reference key="3">
    <citation type="journal article" date="2008" name="Nucleic Acids Res.">
        <title>The rice annotation project database (RAP-DB): 2008 update.</title>
        <authorList>
            <consortium name="The rice annotation project (RAP)"/>
        </authorList>
    </citation>
    <scope>GENOME REANNOTATION</scope>
    <source>
        <strain>cv. Nipponbare</strain>
    </source>
</reference>
<reference key="4">
    <citation type="journal article" date="2013" name="Rice">
        <title>Improvement of the Oryza sativa Nipponbare reference genome using next generation sequence and optical map data.</title>
        <authorList>
            <person name="Kawahara Y."/>
            <person name="de la Bastide M."/>
            <person name="Hamilton J.P."/>
            <person name="Kanamori H."/>
            <person name="McCombie W.R."/>
            <person name="Ouyang S."/>
            <person name="Schwartz D.C."/>
            <person name="Tanaka T."/>
            <person name="Wu J."/>
            <person name="Zhou S."/>
            <person name="Childs K.L."/>
            <person name="Davidson R.M."/>
            <person name="Lin H."/>
            <person name="Quesada-Ocampo L."/>
            <person name="Vaillancourt B."/>
            <person name="Sakai H."/>
            <person name="Lee S.S."/>
            <person name="Kim J."/>
            <person name="Numa H."/>
            <person name="Itoh T."/>
            <person name="Buell C.R."/>
            <person name="Matsumoto T."/>
        </authorList>
    </citation>
    <scope>GENOME REANNOTATION</scope>
    <source>
        <strain>cv. Nipponbare</strain>
    </source>
</reference>
<reference key="5">
    <citation type="journal article" date="2003" name="Science">
        <title>Collection, mapping, and annotation of over 28,000 cDNA clones from japonica rice.</title>
        <authorList>
            <consortium name="The rice full-length cDNA consortium"/>
        </authorList>
    </citation>
    <scope>NUCLEOTIDE SEQUENCE [LARGE SCALE MRNA]</scope>
    <source>
        <strain>cv. Nipponbare</strain>
    </source>
</reference>
<organism>
    <name type="scientific">Oryza sativa subsp. japonica</name>
    <name type="common">Rice</name>
    <dbReference type="NCBI Taxonomy" id="39947"/>
    <lineage>
        <taxon>Eukaryota</taxon>
        <taxon>Viridiplantae</taxon>
        <taxon>Streptophyta</taxon>
        <taxon>Embryophyta</taxon>
        <taxon>Tracheophyta</taxon>
        <taxon>Spermatophyta</taxon>
        <taxon>Magnoliopsida</taxon>
        <taxon>Liliopsida</taxon>
        <taxon>Poales</taxon>
        <taxon>Poaceae</taxon>
        <taxon>BOP clade</taxon>
        <taxon>Oryzoideae</taxon>
        <taxon>Oryzeae</taxon>
        <taxon>Oryzinae</taxon>
        <taxon>Oryza</taxon>
        <taxon>Oryza sativa</taxon>
    </lineage>
</organism>
<dbReference type="EC" id="2.1.1.95" evidence="2"/>
<dbReference type="EMBL" id="DQ456878">
    <property type="protein sequence ID" value="ABE41796.1"/>
    <property type="molecule type" value="mRNA"/>
</dbReference>
<dbReference type="EMBL" id="AP003994">
    <property type="protein sequence ID" value="BAD07529.1"/>
    <property type="molecule type" value="Genomic_DNA"/>
</dbReference>
<dbReference type="EMBL" id="AP008208">
    <property type="protein sequence ID" value="BAF09758.1"/>
    <property type="molecule type" value="Genomic_DNA"/>
</dbReference>
<dbReference type="EMBL" id="AP014958">
    <property type="protein sequence ID" value="BAS80471.1"/>
    <property type="molecule type" value="Genomic_DNA"/>
</dbReference>
<dbReference type="EMBL" id="AK061746">
    <property type="protein sequence ID" value="BAG88086.1"/>
    <property type="molecule type" value="mRNA"/>
</dbReference>
<dbReference type="EMBL" id="AK071763">
    <property type="protein sequence ID" value="BAG92679.1"/>
    <property type="molecule type" value="mRNA"/>
</dbReference>
<dbReference type="RefSeq" id="XP_015623086.1">
    <property type="nucleotide sequence ID" value="XM_015767600.1"/>
</dbReference>
<dbReference type="SMR" id="Q6ZIK0"/>
<dbReference type="FunCoup" id="Q6ZIK0">
    <property type="interactions" value="238"/>
</dbReference>
<dbReference type="STRING" id="39947.Q6ZIK0"/>
<dbReference type="PaxDb" id="39947-Q6ZIK0"/>
<dbReference type="EnsemblPlants" id="Os02t0701600-01">
    <property type="protein sequence ID" value="Os02t0701600-01"/>
    <property type="gene ID" value="Os02g0701600"/>
</dbReference>
<dbReference type="Gramene" id="Os02t0701600-01">
    <property type="protein sequence ID" value="Os02t0701600-01"/>
    <property type="gene ID" value="Os02g0701600"/>
</dbReference>
<dbReference type="KEGG" id="dosa:Os02g0701600"/>
<dbReference type="eggNOG" id="KOG1269">
    <property type="taxonomic scope" value="Eukaryota"/>
</dbReference>
<dbReference type="HOGENOM" id="CLU_039068_0_0_1"/>
<dbReference type="InParanoid" id="Q6ZIK0"/>
<dbReference type="OMA" id="YCLPYVI"/>
<dbReference type="OrthoDB" id="8300214at2759"/>
<dbReference type="PlantReactome" id="R-OSA-1119287">
    <property type="pathway name" value="Vitamin E biosynthesis"/>
</dbReference>
<dbReference type="UniPathway" id="UPA00160"/>
<dbReference type="Proteomes" id="UP000000763">
    <property type="component" value="Chromosome 2"/>
</dbReference>
<dbReference type="Proteomes" id="UP000059680">
    <property type="component" value="Chromosome 2"/>
</dbReference>
<dbReference type="GO" id="GO:0009507">
    <property type="term" value="C:chloroplast"/>
    <property type="evidence" value="ECO:0007669"/>
    <property type="project" value="UniProtKB-SubCell"/>
</dbReference>
<dbReference type="GO" id="GO:0008168">
    <property type="term" value="F:methyltransferase activity"/>
    <property type="evidence" value="ECO:0000318"/>
    <property type="project" value="GO_Central"/>
</dbReference>
<dbReference type="GO" id="GO:0008757">
    <property type="term" value="F:S-adenosylmethionine-dependent methyltransferase activity"/>
    <property type="evidence" value="ECO:0007669"/>
    <property type="project" value="InterPro"/>
</dbReference>
<dbReference type="GO" id="GO:0050342">
    <property type="term" value="F:tocopherol C-methyltransferase activity"/>
    <property type="evidence" value="ECO:0007669"/>
    <property type="project" value="UniProtKB-EC"/>
</dbReference>
<dbReference type="GO" id="GO:0032259">
    <property type="term" value="P:methylation"/>
    <property type="evidence" value="ECO:0007669"/>
    <property type="project" value="UniProtKB-KW"/>
</dbReference>
<dbReference type="GO" id="GO:0010189">
    <property type="term" value="P:vitamin E biosynthetic process"/>
    <property type="evidence" value="ECO:0007669"/>
    <property type="project" value="UniProtKB-UniPathway"/>
</dbReference>
<dbReference type="CDD" id="cd02440">
    <property type="entry name" value="AdoMet_MTases"/>
    <property type="match status" value="1"/>
</dbReference>
<dbReference type="Gene3D" id="3.40.50.150">
    <property type="entry name" value="Vaccinia Virus protein VP39"/>
    <property type="match status" value="1"/>
</dbReference>
<dbReference type="InterPro" id="IPR013216">
    <property type="entry name" value="Methyltransf_11"/>
</dbReference>
<dbReference type="InterPro" id="IPR025774">
    <property type="entry name" value="MTs_g-TMT"/>
</dbReference>
<dbReference type="InterPro" id="IPR029063">
    <property type="entry name" value="SAM-dependent_MTases_sf"/>
</dbReference>
<dbReference type="PANTHER" id="PTHR43591:SF81">
    <property type="entry name" value="MAGNESIUM PROTOPORPHYRIN IX METHYLTRANSFERASE, CHLOROPLASTIC-RELATED"/>
    <property type="match status" value="1"/>
</dbReference>
<dbReference type="PANTHER" id="PTHR43591">
    <property type="entry name" value="METHYLTRANSFERASE"/>
    <property type="match status" value="1"/>
</dbReference>
<dbReference type="Pfam" id="PF08241">
    <property type="entry name" value="Methyltransf_11"/>
    <property type="match status" value="1"/>
</dbReference>
<dbReference type="SUPFAM" id="SSF53335">
    <property type="entry name" value="S-adenosyl-L-methionine-dependent methyltransferases"/>
    <property type="match status" value="1"/>
</dbReference>
<dbReference type="PROSITE" id="PS51581">
    <property type="entry name" value="SAM_GTMT"/>
    <property type="match status" value="1"/>
</dbReference>